<protein>
    <recommendedName>
        <fullName evidence="1">UPF0298 protein SAHV_1113</fullName>
    </recommendedName>
</protein>
<feature type="chain" id="PRO_1000065363" description="UPF0298 protein SAHV_1113">
    <location>
        <begin position="1"/>
        <end position="84"/>
    </location>
</feature>
<proteinExistence type="inferred from homology"/>
<organism>
    <name type="scientific">Staphylococcus aureus (strain Mu3 / ATCC 700698)</name>
    <dbReference type="NCBI Taxonomy" id="418127"/>
    <lineage>
        <taxon>Bacteria</taxon>
        <taxon>Bacillati</taxon>
        <taxon>Bacillota</taxon>
        <taxon>Bacilli</taxon>
        <taxon>Bacillales</taxon>
        <taxon>Staphylococcaceae</taxon>
        <taxon>Staphylococcus</taxon>
    </lineage>
</organism>
<dbReference type="EMBL" id="AP009324">
    <property type="protein sequence ID" value="BAF77996.1"/>
    <property type="molecule type" value="Genomic_DNA"/>
</dbReference>
<dbReference type="RefSeq" id="WP_001049150.1">
    <property type="nucleotide sequence ID" value="NZ_CTYB01000001.1"/>
</dbReference>
<dbReference type="SMR" id="A7X136"/>
<dbReference type="KEGG" id="saw:SAHV_1113"/>
<dbReference type="HOGENOM" id="CLU_159890_2_1_9"/>
<dbReference type="GO" id="GO:0005737">
    <property type="term" value="C:cytoplasm"/>
    <property type="evidence" value="ECO:0007669"/>
    <property type="project" value="UniProtKB-SubCell"/>
</dbReference>
<dbReference type="HAMAP" id="MF_01126">
    <property type="entry name" value="UPF0298"/>
    <property type="match status" value="1"/>
</dbReference>
<dbReference type="InterPro" id="IPR016979">
    <property type="entry name" value="DUF2129"/>
</dbReference>
<dbReference type="Pfam" id="PF09902">
    <property type="entry name" value="DUF2129"/>
    <property type="match status" value="1"/>
</dbReference>
<dbReference type="PIRSF" id="PIRSF031653">
    <property type="entry name" value="UCP031653"/>
    <property type="match status" value="1"/>
</dbReference>
<name>Y1113_STAA1</name>
<comment type="subcellular location">
    <subcellularLocation>
        <location evidence="1">Cytoplasm</location>
    </subcellularLocation>
</comment>
<comment type="similarity">
    <text evidence="1">Belongs to the UPF0298 family.</text>
</comment>
<keyword id="KW-0963">Cytoplasm</keyword>
<evidence type="ECO:0000255" key="1">
    <source>
        <dbReference type="HAMAP-Rule" id="MF_01126"/>
    </source>
</evidence>
<sequence>MNLIPRTSIVVYLKHMKHERQIRKYGHIVHSNRDRKFVIMYVNEQDVDQIVHKLMQLKYVRHIDGSPYKYLKKTYEKEKHEIYN</sequence>
<reference key="1">
    <citation type="journal article" date="2008" name="Antimicrob. Agents Chemother.">
        <title>Mutated response regulator graR is responsible for phenotypic conversion of Staphylococcus aureus from heterogeneous vancomycin-intermediate resistance to vancomycin-intermediate resistance.</title>
        <authorList>
            <person name="Neoh H.-M."/>
            <person name="Cui L."/>
            <person name="Yuzawa H."/>
            <person name="Takeuchi F."/>
            <person name="Matsuo M."/>
            <person name="Hiramatsu K."/>
        </authorList>
    </citation>
    <scope>NUCLEOTIDE SEQUENCE [LARGE SCALE GENOMIC DNA]</scope>
    <source>
        <strain>Mu3 / ATCC 700698</strain>
    </source>
</reference>
<gene>
    <name type="ordered locus">SAHV_1113</name>
</gene>
<accession>A7X136</accession>